<proteinExistence type="inferred from homology"/>
<comment type="function">
    <text evidence="1">Required for maturation of 30S ribosomal subunits.</text>
</comment>
<comment type="subcellular location">
    <subcellularLocation>
        <location evidence="1">Cytoplasm</location>
    </subcellularLocation>
</comment>
<comment type="similarity">
    <text evidence="1">Belongs to the RimP family.</text>
</comment>
<reference key="1">
    <citation type="journal article" date="2005" name="PLoS Genet.">
        <title>Life in hot carbon monoxide: the complete genome sequence of Carboxydothermus hydrogenoformans Z-2901.</title>
        <authorList>
            <person name="Wu M."/>
            <person name="Ren Q."/>
            <person name="Durkin A.S."/>
            <person name="Daugherty S.C."/>
            <person name="Brinkac L.M."/>
            <person name="Dodson R.J."/>
            <person name="Madupu R."/>
            <person name="Sullivan S.A."/>
            <person name="Kolonay J.F."/>
            <person name="Nelson W.C."/>
            <person name="Tallon L.J."/>
            <person name="Jones K.M."/>
            <person name="Ulrich L.E."/>
            <person name="Gonzalez J.M."/>
            <person name="Zhulin I.B."/>
            <person name="Robb F.T."/>
            <person name="Eisen J.A."/>
        </authorList>
    </citation>
    <scope>NUCLEOTIDE SEQUENCE [LARGE SCALE GENOMIC DNA]</scope>
    <source>
        <strain>ATCC BAA-161 / DSM 6008 / Z-2901</strain>
    </source>
</reference>
<evidence type="ECO:0000255" key="1">
    <source>
        <dbReference type="HAMAP-Rule" id="MF_01077"/>
    </source>
</evidence>
<dbReference type="EMBL" id="CP000141">
    <property type="protein sequence ID" value="ABB15696.1"/>
    <property type="molecule type" value="Genomic_DNA"/>
</dbReference>
<dbReference type="RefSeq" id="WP_011344664.1">
    <property type="nucleotide sequence ID" value="NC_007503.1"/>
</dbReference>
<dbReference type="SMR" id="Q3AB94"/>
<dbReference type="FunCoup" id="Q3AB94">
    <property type="interactions" value="275"/>
</dbReference>
<dbReference type="STRING" id="246194.CHY_1770"/>
<dbReference type="KEGG" id="chy:CHY_1770"/>
<dbReference type="eggNOG" id="COG0779">
    <property type="taxonomic scope" value="Bacteria"/>
</dbReference>
<dbReference type="HOGENOM" id="CLU_070525_2_2_9"/>
<dbReference type="InParanoid" id="Q3AB94"/>
<dbReference type="OrthoDB" id="9805006at2"/>
<dbReference type="Proteomes" id="UP000002706">
    <property type="component" value="Chromosome"/>
</dbReference>
<dbReference type="GO" id="GO:0005829">
    <property type="term" value="C:cytosol"/>
    <property type="evidence" value="ECO:0007669"/>
    <property type="project" value="TreeGrafter"/>
</dbReference>
<dbReference type="GO" id="GO:0000028">
    <property type="term" value="P:ribosomal small subunit assembly"/>
    <property type="evidence" value="ECO:0007669"/>
    <property type="project" value="TreeGrafter"/>
</dbReference>
<dbReference type="GO" id="GO:0006412">
    <property type="term" value="P:translation"/>
    <property type="evidence" value="ECO:0007669"/>
    <property type="project" value="TreeGrafter"/>
</dbReference>
<dbReference type="CDD" id="cd01734">
    <property type="entry name" value="YlxS_C"/>
    <property type="match status" value="1"/>
</dbReference>
<dbReference type="FunFam" id="3.30.300.70:FF:000001">
    <property type="entry name" value="Ribosome maturation factor RimP"/>
    <property type="match status" value="1"/>
</dbReference>
<dbReference type="Gene3D" id="2.30.30.180">
    <property type="entry name" value="Ribosome maturation factor RimP, C-terminal domain"/>
    <property type="match status" value="1"/>
</dbReference>
<dbReference type="Gene3D" id="3.30.300.70">
    <property type="entry name" value="RimP-like superfamily, N-terminal"/>
    <property type="match status" value="1"/>
</dbReference>
<dbReference type="HAMAP" id="MF_01077">
    <property type="entry name" value="RimP"/>
    <property type="match status" value="1"/>
</dbReference>
<dbReference type="InterPro" id="IPR003728">
    <property type="entry name" value="Ribosome_maturation_RimP"/>
</dbReference>
<dbReference type="InterPro" id="IPR028998">
    <property type="entry name" value="RimP_C"/>
</dbReference>
<dbReference type="InterPro" id="IPR036847">
    <property type="entry name" value="RimP_C_sf"/>
</dbReference>
<dbReference type="InterPro" id="IPR028989">
    <property type="entry name" value="RimP_N"/>
</dbReference>
<dbReference type="InterPro" id="IPR035956">
    <property type="entry name" value="RimP_N_sf"/>
</dbReference>
<dbReference type="PANTHER" id="PTHR33867">
    <property type="entry name" value="RIBOSOME MATURATION FACTOR RIMP"/>
    <property type="match status" value="1"/>
</dbReference>
<dbReference type="PANTHER" id="PTHR33867:SF1">
    <property type="entry name" value="RIBOSOME MATURATION FACTOR RIMP"/>
    <property type="match status" value="1"/>
</dbReference>
<dbReference type="Pfam" id="PF17384">
    <property type="entry name" value="DUF150_C"/>
    <property type="match status" value="1"/>
</dbReference>
<dbReference type="Pfam" id="PF02576">
    <property type="entry name" value="RimP_N"/>
    <property type="match status" value="1"/>
</dbReference>
<dbReference type="SUPFAM" id="SSF74942">
    <property type="entry name" value="YhbC-like, C-terminal domain"/>
    <property type="match status" value="1"/>
</dbReference>
<dbReference type="SUPFAM" id="SSF75420">
    <property type="entry name" value="YhbC-like, N-terminal domain"/>
    <property type="match status" value="1"/>
</dbReference>
<protein>
    <recommendedName>
        <fullName evidence="1">Ribosome maturation factor RimP</fullName>
    </recommendedName>
</protein>
<organism>
    <name type="scientific">Carboxydothermus hydrogenoformans (strain ATCC BAA-161 / DSM 6008 / Z-2901)</name>
    <dbReference type="NCBI Taxonomy" id="246194"/>
    <lineage>
        <taxon>Bacteria</taxon>
        <taxon>Bacillati</taxon>
        <taxon>Bacillota</taxon>
        <taxon>Clostridia</taxon>
        <taxon>Thermoanaerobacterales</taxon>
        <taxon>Thermoanaerobacteraceae</taxon>
        <taxon>Carboxydothermus</taxon>
    </lineage>
</organism>
<sequence>MGRNKGIEQKVWPLAERVGGELNLEVVDVEFVKEAGRYFLRIYIDKDEGVDLDDCQNFSERIGVILDEEDPIPQSYYLEVSSPGIERPLKKLADFEKFAGREAQIKTFAAIEGQKQFKGKLLGVRDGQVVIDAGKGEVQIPLEQIAKANLTFDF</sequence>
<accession>Q3AB94</accession>
<gene>
    <name evidence="1" type="primary">rimP</name>
    <name type="ordered locus">CHY_1770</name>
</gene>
<keyword id="KW-0963">Cytoplasm</keyword>
<keyword id="KW-1185">Reference proteome</keyword>
<keyword id="KW-0690">Ribosome biogenesis</keyword>
<feature type="chain" id="PRO_0000229230" description="Ribosome maturation factor RimP">
    <location>
        <begin position="1"/>
        <end position="154"/>
    </location>
</feature>
<name>RIMP_CARHZ</name>